<proteinExistence type="evidence at protein level"/>
<reference key="1">
    <citation type="journal article" date="1998" name="Nature">
        <title>Deciphering the biology of Mycobacterium tuberculosis from the complete genome sequence.</title>
        <authorList>
            <person name="Cole S.T."/>
            <person name="Brosch R."/>
            <person name="Parkhill J."/>
            <person name="Garnier T."/>
            <person name="Churcher C.M."/>
            <person name="Harris D.E."/>
            <person name="Gordon S.V."/>
            <person name="Eiglmeier K."/>
            <person name="Gas S."/>
            <person name="Barry C.E. III"/>
            <person name="Tekaia F."/>
            <person name="Badcock K."/>
            <person name="Basham D."/>
            <person name="Brown D."/>
            <person name="Chillingworth T."/>
            <person name="Connor R."/>
            <person name="Davies R.M."/>
            <person name="Devlin K."/>
            <person name="Feltwell T."/>
            <person name="Gentles S."/>
            <person name="Hamlin N."/>
            <person name="Holroyd S."/>
            <person name="Hornsby T."/>
            <person name="Jagels K."/>
            <person name="Krogh A."/>
            <person name="McLean J."/>
            <person name="Moule S."/>
            <person name="Murphy L.D."/>
            <person name="Oliver S."/>
            <person name="Osborne J."/>
            <person name="Quail M.A."/>
            <person name="Rajandream M.A."/>
            <person name="Rogers J."/>
            <person name="Rutter S."/>
            <person name="Seeger K."/>
            <person name="Skelton S."/>
            <person name="Squares S."/>
            <person name="Squares R."/>
            <person name="Sulston J.E."/>
            <person name="Taylor K."/>
            <person name="Whitehead S."/>
            <person name="Barrell B.G."/>
        </authorList>
    </citation>
    <scope>NUCLEOTIDE SEQUENCE [LARGE SCALE GENOMIC DNA]</scope>
    <source>
        <strain>ATCC 25618 / H37Rv</strain>
    </source>
</reference>
<reference key="2">
    <citation type="journal article" date="1998" name="Chem. Biol.">
        <title>Identification of a Mycobacterium tuberculosis gene cluster encoding the biosynthetic enzymes for assembly of the virulence-conferring siderophore mycobactin.</title>
        <authorList>
            <person name="Quadri L.E.N."/>
            <person name="Sello J."/>
            <person name="Keating T.A."/>
            <person name="Weinreb P.H."/>
            <person name="Walsh C.T."/>
        </authorList>
    </citation>
    <scope>FUNCTION</scope>
    <scope>CATALYTIC ACTIVITY</scope>
    <source>
        <strain>CSU93</strain>
    </source>
</reference>
<reference key="3">
    <citation type="journal article" date="2006" name="Proc. Natl. Acad. Sci. U.S.A.">
        <title>The nonredundant roles of two 4'-phosphopantetheinyl transferases in vital processes of Mycobacteria.</title>
        <authorList>
            <person name="Chalut C."/>
            <person name="Botella L."/>
            <person name="de Sousa-D'Auria C."/>
            <person name="Houssin C."/>
            <person name="Guilhot C."/>
        </authorList>
    </citation>
    <scope>FUNCTION</scope>
    <scope>CATALYTIC ACTIVITY</scope>
</reference>
<reference key="4">
    <citation type="journal article" date="2011" name="Mol. Cell. Proteomics">
        <title>Proteogenomic analysis of Mycobacterium tuberculosis by high resolution mass spectrometry.</title>
        <authorList>
            <person name="Kelkar D.S."/>
            <person name="Kumar D."/>
            <person name="Kumar P."/>
            <person name="Balakrishnan L."/>
            <person name="Muthusamy B."/>
            <person name="Yadav A.K."/>
            <person name="Shrivastava P."/>
            <person name="Marimuthu A."/>
            <person name="Anand S."/>
            <person name="Sundaram H."/>
            <person name="Kingsbury R."/>
            <person name="Harsha H.C."/>
            <person name="Nair B."/>
            <person name="Prasad T.S."/>
            <person name="Chauhan D.S."/>
            <person name="Katoch K."/>
            <person name="Katoch V.M."/>
            <person name="Kumar P."/>
            <person name="Chaerkady R."/>
            <person name="Ramachandran S."/>
            <person name="Dash D."/>
            <person name="Pandey A."/>
        </authorList>
    </citation>
    <scope>IDENTIFICATION BY MASS SPECTROMETRY [LARGE SCALE ANALYSIS]</scope>
    <source>
        <strain>ATCC 25618 / H37Rv</strain>
    </source>
</reference>
<reference key="5">
    <citation type="journal article" date="2012" name="PLoS Pathog.">
        <title>4'-phosphopantetheinyl transferase PptT, a new drug target required for Mycobacterium tuberculosis growth and persistence in vivo.</title>
        <authorList>
            <person name="Leblanc C."/>
            <person name="Prudhomme T."/>
            <person name="Tabouret G."/>
            <person name="Ray A."/>
            <person name="Burbaud S."/>
            <person name="Cabantous S."/>
            <person name="Mourey L."/>
            <person name="Guilhot C."/>
            <person name="Chalut C."/>
        </authorList>
    </citation>
    <scope>FUNCTION IN VIRULENCE</scope>
    <scope>IDENTIFICATION AS A DRUG TARGET</scope>
</reference>
<reference key="6">
    <citation type="journal article" date="2015" name="Biochemistry">
        <title>AcpM, the meromycolate extension acyl carrier protein of Mycobacterium tuberculosis, is activated by the 4'-phosphopantetheinyl transferase PptT, a potential target of the multistep mycolic acid biosynthesis.</title>
        <authorList>
            <person name="Zimhony O."/>
            <person name="Schwarz A."/>
            <person name="Raitses-Gurevich M."/>
            <person name="Peleg Y."/>
            <person name="Dym O."/>
            <person name="Albeck S."/>
            <person name="Burstein Y."/>
            <person name="Shakked Z."/>
        </authorList>
    </citation>
    <scope>FUNCTION</scope>
    <scope>CATALYTIC ACTIVITY</scope>
    <scope>COFACTOR</scope>
</reference>
<reference key="7">
    <citation type="journal article" date="2016" name="FEBS Open Bio">
        <title>Mass spectral determination of phosphopantetheinylation specificity for carrier proteins in Mycobacterium tuberculosis.</title>
        <authorList>
            <person name="Jung J."/>
            <person name="Bashiri G."/>
            <person name="Johnston J.M."/>
            <person name="Baker E.N."/>
        </authorList>
    </citation>
    <scope>FUNCTION</scope>
    <scope>CATALYTIC ACTIVITY</scope>
</reference>
<reference key="8">
    <citation type="journal article" date="2013" name="Bioinformation">
        <title>Insights from the docking and molecular dynamics simulation of the Phosphopantetheinyl transferase (PptT) structural model from Mycobacterium tuberculosis.</title>
        <authorList>
            <person name="Rohini K."/>
            <person name="Srikumar P.S."/>
        </authorList>
    </citation>
    <scope>STRUCTURAL MODELING</scope>
</reference>
<reference evidence="13" key="9">
    <citation type="journal article" date="2014" name="ACS Chem. Biol.">
        <title>Structure, biochemistry, and inhibition of essential 4'-phosphopantetheinyl transferases from two species of Mycobacteria.</title>
        <authorList>
            <person name="Vickery C.R."/>
            <person name="Kosa N.M."/>
            <person name="Casavant E.P."/>
            <person name="Duan S."/>
            <person name="Noel J.P."/>
            <person name="Burkart M.D."/>
        </authorList>
    </citation>
    <scope>X-RAY CRYSTALLOGRAPHY (1.59 ANGSTROMS) IN COMPLEX WITH COENZYME A</scope>
    <scope>MUTAGENESIS OF ARG-48; ARG-56; ASP-114; GLU-116 AND GLU-157</scope>
</reference>
<reference evidence="14" key="10">
    <citation type="journal article" date="2014" name="J. Struct. Biol.">
        <title>Crystal structure of the essential Mycobacterium tuberculosis phosphopantetheinyl transferase PptT, solved as a fusion protein with maltose binding protein.</title>
        <authorList>
            <person name="Jung J."/>
            <person name="Bashiri G."/>
            <person name="Johnston J.M."/>
            <person name="Brown A.S."/>
            <person name="Ackerley D.F."/>
            <person name="Baker E.N."/>
        </authorList>
    </citation>
    <scope>X-RAY CRYSTALLOGRAPHY (1.75 ANGSTROMS) IN COMPLEX WITH COENZYME A AND MAGNESIUM</scope>
    <source>
        <strain>H37Rv</strain>
    </source>
</reference>
<reference evidence="15" key="11">
    <citation type="submission" date="2014-08" db="PDB data bank">
        <title>X-ray structure of the 4'-phosphopantetheinyl transferase PptT from Mycobacterium tuberculosis.</title>
        <authorList>
            <person name="Faille A."/>
            <person name="Gavalda S."/>
            <person name="Rottier K."/>
            <person name="Mourey L."/>
            <person name="Pedelacq J.D."/>
        </authorList>
    </citation>
    <scope>X-RAY CRYSTALLOGRAPHY (1.40 ANGSTROMS) IN COMPLEX WITH COENZYME A</scope>
</reference>
<reference evidence="16" key="12">
    <citation type="journal article" date="2019" name="Science">
        <title>Opposing reactions in coenzyme A metabolism sensitize Mycobacterium tuberculosis to enzyme inhibition.</title>
        <authorList>
            <person name="Ballinger E."/>
            <person name="Mosior J."/>
            <person name="Hartman T."/>
            <person name="Burns-Huang K."/>
            <person name="Gold B."/>
            <person name="Morris R."/>
            <person name="Goullieux L."/>
            <person name="Blanc I."/>
            <person name="Vaubourgeix J."/>
            <person name="Lagrange S."/>
            <person name="Fraisse L."/>
            <person name="Sans S."/>
            <person name="Couturier C."/>
            <person name="Bacque E."/>
            <person name="Rhee K."/>
            <person name="Scarry S.M."/>
            <person name="Aube J."/>
            <person name="Yang G."/>
            <person name="Ouerfelli O."/>
            <person name="Schnappinger D."/>
            <person name="Ioerger T.R."/>
            <person name="Engelhart C.A."/>
            <person name="McConnell J.A."/>
            <person name="McAulay K."/>
            <person name="Fay A."/>
            <person name="Roubert C."/>
            <person name="Sacchettini J."/>
            <person name="Nathan C."/>
        </authorList>
    </citation>
    <scope>X-RAY CRYSTALLOGRAPHY (1.76 ANGSTROMS) IN COMPLEX WITH COENZYME A; MAGNESIUM AND INHIBITOR 8918</scope>
    <scope>ACTIVITY REGULATION</scope>
    <scope>MUTAGENESIS OF TRP-170</scope>
</reference>
<reference key="13">
    <citation type="journal article" date="2019" name="Science">
        <title>Opposing reactions in coenzyme A metabolism sensitize Mycobacterium tuberculosis to enzyme inhibition.</title>
        <authorList>
            <person name="Ballinger E."/>
            <person name="Mosior J."/>
            <person name="Hartman T."/>
            <person name="Burns-Huang K."/>
            <person name="Gold B."/>
            <person name="Morris R."/>
            <person name="Goullieux L."/>
            <person name="Blanc I."/>
            <person name="Vaubourgeix J."/>
            <person name="Lagrange S."/>
            <person name="Fraisse L."/>
            <person name="Sans S."/>
            <person name="Couturier C."/>
            <person name="Bacque E."/>
            <person name="Rhee K."/>
            <person name="Scarry S.M."/>
            <person name="Aube J."/>
            <person name="Yang G."/>
            <person name="Ouerfelli O."/>
            <person name="Schnappinger D."/>
            <person name="Ioerger T.R."/>
            <person name="Engelhart C.A."/>
            <person name="McConnell J.A."/>
            <person name="McAulay K."/>
            <person name="Fay A."/>
            <person name="Roubert C."/>
            <person name="Sacchettini J."/>
            <person name="Nathan C."/>
        </authorList>
    </citation>
    <scope>ERRATUM OF PUBMED:30705156</scope>
</reference>
<name>PPTT_MYCTU</name>
<gene>
    <name evidence="10" type="primary">pptT</name>
    <name evidence="12" type="ordered locus">Rv2794c</name>
</gene>
<keyword id="KW-0002">3D-structure</keyword>
<keyword id="KW-0460">Magnesium</keyword>
<keyword id="KW-0479">Metal-binding</keyword>
<keyword id="KW-1185">Reference proteome</keyword>
<keyword id="KW-0808">Transferase</keyword>
<accession>O33336</accession>
<accession>I6XFB3</accession>
<dbReference type="EC" id="2.7.8.7" evidence="1 5 6 8"/>
<dbReference type="EMBL" id="AL123456">
    <property type="protein sequence ID" value="CCP45593.1"/>
    <property type="molecule type" value="Genomic_DNA"/>
</dbReference>
<dbReference type="RefSeq" id="NP_217310.1">
    <property type="nucleotide sequence ID" value="NC_000962.3"/>
</dbReference>
<dbReference type="RefSeq" id="WP_003917055.1">
    <property type="nucleotide sequence ID" value="NZ_NVQJ01000020.1"/>
</dbReference>
<dbReference type="PDB" id="4QJK">
    <property type="method" value="X-ray"/>
    <property type="resolution" value="1.59 A"/>
    <property type="chains" value="A=1-227"/>
</dbReference>
<dbReference type="PDB" id="4QVH">
    <property type="method" value="X-ray"/>
    <property type="resolution" value="1.75 A"/>
    <property type="chains" value="A/B=1-227"/>
</dbReference>
<dbReference type="PDB" id="4U89">
    <property type="method" value="X-ray"/>
    <property type="resolution" value="1.40 A"/>
    <property type="chains" value="A=1-227"/>
</dbReference>
<dbReference type="PDB" id="6CT5">
    <property type="method" value="X-ray"/>
    <property type="resolution" value="1.76 A"/>
    <property type="chains" value="A/B=1-227"/>
</dbReference>
<dbReference type="PDB" id="7ED0">
    <property type="method" value="X-ray"/>
    <property type="resolution" value="1.65 A"/>
    <property type="chains" value="A=1-227"/>
</dbReference>
<dbReference type="PDB" id="7N8E">
    <property type="method" value="X-ray"/>
    <property type="resolution" value="1.74 A"/>
    <property type="chains" value="A/B=1-227"/>
</dbReference>
<dbReference type="PDB" id="7N8L">
    <property type="method" value="X-ray"/>
    <property type="resolution" value="2.26 A"/>
    <property type="chains" value="A/B=1-227"/>
</dbReference>
<dbReference type="PDB" id="7N8M">
    <property type="method" value="X-ray"/>
    <property type="resolution" value="1.57 A"/>
    <property type="chains" value="A/B=1-227"/>
</dbReference>
<dbReference type="PDB" id="8GKF">
    <property type="method" value="X-ray"/>
    <property type="resolution" value="2.45 A"/>
    <property type="chains" value="A/B/C/D/E/F/G/H/I=1-227"/>
</dbReference>
<dbReference type="PDB" id="8QZH">
    <property type="method" value="X-ray"/>
    <property type="resolution" value="1.70 A"/>
    <property type="chains" value="A=1-227"/>
</dbReference>
<dbReference type="PDB" id="8QZI">
    <property type="method" value="X-ray"/>
    <property type="resolution" value="2.50 A"/>
    <property type="chains" value="A/B/C/D=1-227"/>
</dbReference>
<dbReference type="PDB" id="8QZJ">
    <property type="method" value="X-ray"/>
    <property type="resolution" value="2.00 A"/>
    <property type="chains" value="A/B/C/D=1-227"/>
</dbReference>
<dbReference type="PDBsum" id="4QJK"/>
<dbReference type="PDBsum" id="4QVH"/>
<dbReference type="PDBsum" id="4U89"/>
<dbReference type="PDBsum" id="6CT5"/>
<dbReference type="PDBsum" id="7ED0"/>
<dbReference type="PDBsum" id="7N8E"/>
<dbReference type="PDBsum" id="7N8L"/>
<dbReference type="PDBsum" id="7N8M"/>
<dbReference type="PDBsum" id="8GKF"/>
<dbReference type="PDBsum" id="8QZH"/>
<dbReference type="PDBsum" id="8QZI"/>
<dbReference type="PDBsum" id="8QZJ"/>
<dbReference type="SMR" id="O33336"/>
<dbReference type="FunCoup" id="O33336">
    <property type="interactions" value="1"/>
</dbReference>
<dbReference type="STRING" id="83332.Rv2794c"/>
<dbReference type="BindingDB" id="O33336"/>
<dbReference type="ChEMBL" id="CHEMBL5465373"/>
<dbReference type="PaxDb" id="83332-Rv2794c"/>
<dbReference type="DNASU" id="888226"/>
<dbReference type="GeneID" id="888226"/>
<dbReference type="KEGG" id="mtu:Rv2794c"/>
<dbReference type="KEGG" id="mtv:RVBD_2794c"/>
<dbReference type="PATRIC" id="fig|83332.111.peg.3107"/>
<dbReference type="TubercuList" id="Rv2794c"/>
<dbReference type="eggNOG" id="COG2977">
    <property type="taxonomic scope" value="Bacteria"/>
</dbReference>
<dbReference type="InParanoid" id="O33336"/>
<dbReference type="OrthoDB" id="8210607at2"/>
<dbReference type="PhylomeDB" id="O33336"/>
<dbReference type="BRENDA" id="2.7.8.7">
    <property type="organism ID" value="3445"/>
</dbReference>
<dbReference type="EvolutionaryTrace" id="O33336"/>
<dbReference type="PHI-base" id="PHI:2629"/>
<dbReference type="Proteomes" id="UP000001584">
    <property type="component" value="Chromosome"/>
</dbReference>
<dbReference type="GO" id="GO:0009366">
    <property type="term" value="C:enterobactin synthetase complex"/>
    <property type="evidence" value="ECO:0007669"/>
    <property type="project" value="InterPro"/>
</dbReference>
<dbReference type="GO" id="GO:0005886">
    <property type="term" value="C:plasma membrane"/>
    <property type="evidence" value="ECO:0007005"/>
    <property type="project" value="MTBBASE"/>
</dbReference>
<dbReference type="GO" id="GO:0008897">
    <property type="term" value="F:holo-[acyl-carrier-protein] synthase activity"/>
    <property type="evidence" value="ECO:0000314"/>
    <property type="project" value="MTBBASE"/>
</dbReference>
<dbReference type="GO" id="GO:0000287">
    <property type="term" value="F:magnesium ion binding"/>
    <property type="evidence" value="ECO:0007669"/>
    <property type="project" value="InterPro"/>
</dbReference>
<dbReference type="GO" id="GO:0009239">
    <property type="term" value="P:enterobactin biosynthetic process"/>
    <property type="evidence" value="ECO:0007669"/>
    <property type="project" value="InterPro"/>
</dbReference>
<dbReference type="GO" id="GO:0019290">
    <property type="term" value="P:siderophore biosynthetic process"/>
    <property type="evidence" value="ECO:0000314"/>
    <property type="project" value="UniProtKB"/>
</dbReference>
<dbReference type="GO" id="GO:0009237">
    <property type="term" value="P:siderophore metabolic process"/>
    <property type="evidence" value="ECO:0000318"/>
    <property type="project" value="GO_Central"/>
</dbReference>
<dbReference type="InterPro" id="IPR008278">
    <property type="entry name" value="4-PPantetheinyl_Trfase_dom"/>
</dbReference>
<dbReference type="InterPro" id="IPR037143">
    <property type="entry name" value="4-PPantetheinyl_Trfase_dom_sf"/>
</dbReference>
<dbReference type="InterPro" id="IPR041354">
    <property type="entry name" value="4PPT_N"/>
</dbReference>
<dbReference type="InterPro" id="IPR003542">
    <property type="entry name" value="Enbac_synth_compD-like"/>
</dbReference>
<dbReference type="PANTHER" id="PTHR38096">
    <property type="entry name" value="ENTEROBACTIN SYNTHASE COMPONENT D"/>
    <property type="match status" value="1"/>
</dbReference>
<dbReference type="PANTHER" id="PTHR38096:SF1">
    <property type="entry name" value="ENTEROBACTIN SYNTHASE COMPONENT D"/>
    <property type="match status" value="1"/>
</dbReference>
<dbReference type="Pfam" id="PF17837">
    <property type="entry name" value="4PPT_N"/>
    <property type="match status" value="1"/>
</dbReference>
<dbReference type="Pfam" id="PF01648">
    <property type="entry name" value="ACPS"/>
    <property type="match status" value="1"/>
</dbReference>
<dbReference type="PRINTS" id="PR01399">
    <property type="entry name" value="ENTSNTHTASED"/>
</dbReference>
<dbReference type="SUPFAM" id="SSF56214">
    <property type="entry name" value="4'-phosphopantetheinyl transferase"/>
    <property type="match status" value="1"/>
</dbReference>
<comment type="function">
    <text evidence="1 5 6 8">Transfers the 4'-phosphopantetheine moiety from coenzyme A to a Ser of acyl-carrier-protein (PubMed:16709676, PubMed:25785780, PubMed:28203522, PubMed:9831524). Involved in post-translational modification of various type-I polyketide synthases required for the formation of both mycolic acids and lipid virulence factors (PubMed:16709676). Acts on Pks13, Mas, PpsA, PpsB, PpsC and PpsD (PubMed:16709676, PubMed:28203522). Also acts on AcpM, the meromycolate extension acyl carrier protein (PubMed:25785780). In addition, is involved in the activation of the acyl carrier protein MbtL and the nonribosomal peptides synthases MbtB and MbtE, which are involved in the biosynthesis of the siderophore mycobactin (PubMed:28203522, PubMed:9831524).</text>
</comment>
<comment type="function">
    <text evidence="2">Required for the replication and survival of Mycobacterium during the acute and chronic phases of infection in mice.</text>
</comment>
<comment type="catalytic activity">
    <reaction evidence="1 5 6 8">
        <text>apo-[ACP] + CoA = holo-[ACP] + adenosine 3',5'-bisphosphate + H(+)</text>
        <dbReference type="Rhea" id="RHEA:12068"/>
        <dbReference type="Rhea" id="RHEA-COMP:9685"/>
        <dbReference type="Rhea" id="RHEA-COMP:9690"/>
        <dbReference type="ChEBI" id="CHEBI:15378"/>
        <dbReference type="ChEBI" id="CHEBI:29999"/>
        <dbReference type="ChEBI" id="CHEBI:57287"/>
        <dbReference type="ChEBI" id="CHEBI:58343"/>
        <dbReference type="ChEBI" id="CHEBI:64479"/>
        <dbReference type="EC" id="2.7.8.7"/>
    </reaction>
</comment>
<comment type="cofactor">
    <cofactor evidence="5">
        <name>Mg(2+)</name>
        <dbReference type="ChEBI" id="CHEBI:18420"/>
    </cofactor>
</comment>
<comment type="activity regulation">
    <text evidence="7">Inhibited by the amidino-urea compound 1-[(2,6-diethylphenyl)-3-N-ethylcarbamimodoyl]urea (compound 8918). It acts by binding to the phosphopantetheine pocket in the active site. Inhibition by compound 8918 kills M.tuberculosis.</text>
</comment>
<comment type="miscellaneous">
    <text evidence="2">Identified as a drug target.</text>
</comment>
<comment type="similarity">
    <text evidence="11">Belongs to the P-Pant transferase superfamily.</text>
</comment>
<feature type="chain" id="PRO_0000451441" description="4'-phosphopantetheinyl transferase PptT">
    <location>
        <begin position="1"/>
        <end position="227"/>
    </location>
</feature>
<feature type="binding site" evidence="3 4 9">
    <location>
        <position position="48"/>
    </location>
    <ligand>
        <name>CoA</name>
        <dbReference type="ChEBI" id="CHEBI:57287"/>
    </ligand>
</feature>
<feature type="binding site" evidence="3 4 9">
    <location>
        <position position="56"/>
    </location>
    <ligand>
        <name>CoA</name>
        <dbReference type="ChEBI" id="CHEBI:57287"/>
    </ligand>
</feature>
<feature type="binding site" evidence="3 4 9">
    <location>
        <begin position="75"/>
        <end position="78"/>
    </location>
    <ligand>
        <name>CoA</name>
        <dbReference type="ChEBI" id="CHEBI:57287"/>
    </ligand>
</feature>
<feature type="binding site" evidence="3 4 9">
    <location>
        <begin position="92"/>
        <end position="93"/>
    </location>
    <ligand>
        <name>CoA</name>
        <dbReference type="ChEBI" id="CHEBI:57287"/>
    </ligand>
</feature>
<feature type="binding site" evidence="3 4">
    <location>
        <position position="114"/>
    </location>
    <ligand>
        <name>CoA</name>
        <dbReference type="ChEBI" id="CHEBI:57287"/>
    </ligand>
</feature>
<feature type="binding site" evidence="4 14">
    <location>
        <position position="114"/>
    </location>
    <ligand>
        <name>Mg(2+)</name>
        <dbReference type="ChEBI" id="CHEBI:18420"/>
    </ligand>
</feature>
<feature type="binding site" evidence="4 14">
    <location>
        <position position="115"/>
    </location>
    <ligand>
        <name>Mg(2+)</name>
        <dbReference type="ChEBI" id="CHEBI:18420"/>
    </ligand>
</feature>
<feature type="binding site" evidence="4 14">
    <location>
        <position position="116"/>
    </location>
    <ligand>
        <name>Mg(2+)</name>
        <dbReference type="ChEBI" id="CHEBI:18420"/>
    </ligand>
</feature>
<feature type="binding site" evidence="3 9">
    <location>
        <position position="157"/>
    </location>
    <ligand>
        <name>CoA</name>
        <dbReference type="ChEBI" id="CHEBI:57287"/>
    </ligand>
</feature>
<feature type="binding site" evidence="3 4 9">
    <location>
        <position position="161"/>
    </location>
    <ligand>
        <name>CoA</name>
        <dbReference type="ChEBI" id="CHEBI:57287"/>
    </ligand>
</feature>
<feature type="binding site" evidence="3 4 9">
    <location>
        <position position="171"/>
    </location>
    <ligand>
        <name>CoA</name>
        <dbReference type="ChEBI" id="CHEBI:57287"/>
    </ligand>
</feature>
<feature type="mutagenesis site" description="20-fold decrease in phosphopantetheinylation activity." evidence="3">
    <original>R</original>
    <variation>A</variation>
    <location>
        <position position="48"/>
    </location>
</feature>
<feature type="mutagenesis site" description="100-fold decrease in phosphopantetheinylation activity." evidence="3">
    <original>R</original>
    <variation>A</variation>
    <location>
        <position position="56"/>
    </location>
</feature>
<feature type="mutagenesis site" description="Abolishes phosphopantetheinylation activity." evidence="3">
    <original>D</original>
    <variation>N</variation>
    <location>
        <position position="114"/>
    </location>
</feature>
<feature type="mutagenesis site" description="500-fold decrease in phosphopantetheinylation activity." evidence="3">
    <original>E</original>
    <variation>Q</variation>
    <location>
        <position position="116"/>
    </location>
</feature>
<feature type="mutagenesis site" description="Abolishes phosphopantetheinylation activity." evidence="3">
    <original>E</original>
    <variation>Q</variation>
    <location>
        <position position="157"/>
    </location>
</feature>
<feature type="mutagenesis site" description="Confers high-level resistance to compound 8918." evidence="7">
    <original>W</original>
    <variation>L</variation>
    <variation>S</variation>
    <location>
        <position position="170"/>
    </location>
</feature>
<feature type="helix" evidence="17">
    <location>
        <begin position="6"/>
        <end position="10"/>
    </location>
</feature>
<feature type="helix" evidence="19">
    <location>
        <begin position="13"/>
        <end position="15"/>
    </location>
</feature>
<feature type="helix" evidence="17">
    <location>
        <begin position="16"/>
        <end position="18"/>
    </location>
</feature>
<feature type="strand" evidence="17">
    <location>
        <begin position="19"/>
        <end position="26"/>
    </location>
</feature>
<feature type="turn" evidence="17">
    <location>
        <begin position="35"/>
        <end position="37"/>
    </location>
</feature>
<feature type="helix" evidence="17">
    <location>
        <begin position="38"/>
        <end position="41"/>
    </location>
</feature>
<feature type="strand" evidence="18">
    <location>
        <begin position="42"/>
        <end position="44"/>
    </location>
</feature>
<feature type="helix" evidence="17">
    <location>
        <begin position="46"/>
        <end position="65"/>
    </location>
</feature>
<feature type="helix" evidence="17">
    <location>
        <begin position="77"/>
        <end position="79"/>
    </location>
</feature>
<feature type="strand" evidence="17">
    <location>
        <begin position="87"/>
        <end position="94"/>
    </location>
</feature>
<feature type="strand" evidence="17">
    <location>
        <begin position="97"/>
        <end position="104"/>
    </location>
</feature>
<feature type="turn" evidence="17">
    <location>
        <begin position="105"/>
        <end position="107"/>
    </location>
</feature>
<feature type="strand" evidence="17">
    <location>
        <begin position="109"/>
        <end position="118"/>
    </location>
</feature>
<feature type="helix" evidence="17">
    <location>
        <begin position="123"/>
        <end position="129"/>
    </location>
</feature>
<feature type="helix" evidence="17">
    <location>
        <begin position="132"/>
        <end position="141"/>
    </location>
</feature>
<feature type="helix" evidence="17">
    <location>
        <begin position="148"/>
        <end position="167"/>
    </location>
</feature>
<feature type="helix" evidence="17">
    <location>
        <begin position="173"/>
        <end position="175"/>
    </location>
</feature>
<feature type="strand" evidence="17">
    <location>
        <begin position="176"/>
        <end position="182"/>
    </location>
</feature>
<feature type="strand" evidence="17">
    <location>
        <begin position="186"/>
        <end position="195"/>
    </location>
</feature>
<feature type="strand" evidence="17">
    <location>
        <begin position="202"/>
        <end position="205"/>
    </location>
</feature>
<feature type="strand" evidence="17">
    <location>
        <begin position="209"/>
        <end position="217"/>
    </location>
</feature>
<feature type="strand" evidence="17">
    <location>
        <begin position="220"/>
        <end position="227"/>
    </location>
</feature>
<protein>
    <recommendedName>
        <fullName evidence="11">4'-phosphopantetheinyl transferase PptT</fullName>
        <shortName evidence="10">PPTase</shortName>
        <ecNumber evidence="1 5 6 8">2.7.8.7</ecNumber>
    </recommendedName>
</protein>
<evidence type="ECO:0000269" key="1">
    <source>
    </source>
</evidence>
<evidence type="ECO:0000269" key="2">
    <source>
    </source>
</evidence>
<evidence type="ECO:0000269" key="3">
    <source>
    </source>
</evidence>
<evidence type="ECO:0000269" key="4">
    <source>
    </source>
</evidence>
<evidence type="ECO:0000269" key="5">
    <source>
    </source>
</evidence>
<evidence type="ECO:0000269" key="6">
    <source>
    </source>
</evidence>
<evidence type="ECO:0000269" key="7">
    <source>
    </source>
</evidence>
<evidence type="ECO:0000269" key="8">
    <source>
    </source>
</evidence>
<evidence type="ECO:0000269" key="9">
    <source ref="11"/>
</evidence>
<evidence type="ECO:0000303" key="10">
    <source>
    </source>
</evidence>
<evidence type="ECO:0000305" key="11"/>
<evidence type="ECO:0000312" key="12">
    <source>
        <dbReference type="EMBL" id="CCP45593.1"/>
    </source>
</evidence>
<evidence type="ECO:0007744" key="13">
    <source>
        <dbReference type="PDB" id="4QJK"/>
    </source>
</evidence>
<evidence type="ECO:0007744" key="14">
    <source>
        <dbReference type="PDB" id="4QVH"/>
    </source>
</evidence>
<evidence type="ECO:0007744" key="15">
    <source>
        <dbReference type="PDB" id="4U89"/>
    </source>
</evidence>
<evidence type="ECO:0007744" key="16">
    <source>
        <dbReference type="PDB" id="6CT5"/>
    </source>
</evidence>
<evidence type="ECO:0007829" key="17">
    <source>
        <dbReference type="PDB" id="4U89"/>
    </source>
</evidence>
<evidence type="ECO:0007829" key="18">
    <source>
        <dbReference type="PDB" id="8GKF"/>
    </source>
</evidence>
<evidence type="ECO:0007829" key="19">
    <source>
        <dbReference type="PDB" id="8QZI"/>
    </source>
</evidence>
<sequence>MTVGTLVASVLPATVFEDLAYAELYSDPPGLTPLPEEAPLIARSVAKRRNEFITVRHCARIALDQLGVPPAPILKGDKGEPCWPDGMVGSLTHCAGYRGAVVGRRDAVRSVGIDAEPHDVLPNGVLDAISLPAERADMPRTMPAALHWDRILFCAKEATYKAWFPLTKRWLGFEDAHITFETDSTGWTGRFVSRILIDGSTLSGPPLTTLRGRWSVERGLVLTAIVL</sequence>
<organism>
    <name type="scientific">Mycobacterium tuberculosis (strain ATCC 25618 / H37Rv)</name>
    <dbReference type="NCBI Taxonomy" id="83332"/>
    <lineage>
        <taxon>Bacteria</taxon>
        <taxon>Bacillati</taxon>
        <taxon>Actinomycetota</taxon>
        <taxon>Actinomycetes</taxon>
        <taxon>Mycobacteriales</taxon>
        <taxon>Mycobacteriaceae</taxon>
        <taxon>Mycobacterium</taxon>
        <taxon>Mycobacterium tuberculosis complex</taxon>
    </lineage>
</organism>